<proteinExistence type="inferred from homology"/>
<reference key="1">
    <citation type="journal article" date="2002" name="Biochim. Biophys. Acta">
        <title>Evidence for lateral transfer to Brucellae: characterization of a locus with a Tn-like element (Tn2020).</title>
        <authorList>
            <person name="Halling S.M."/>
            <person name="Zuerner R.L."/>
        </authorList>
    </citation>
    <scope>NUCLEOTIDE SEQUENCE [GENOMIC DNA]</scope>
</reference>
<reference key="2">
    <citation type="journal article" date="2005" name="J. Bacteriol.">
        <title>Completion of the genome sequence of Brucella abortus and comparison to the highly similar genomes of Brucella melitensis and Brucella suis.</title>
        <authorList>
            <person name="Halling S.M."/>
            <person name="Peterson-Burch B.D."/>
            <person name="Bricker B.J."/>
            <person name="Zuerner R.L."/>
            <person name="Qing Z."/>
            <person name="Li L.-L."/>
            <person name="Kapur V."/>
            <person name="Alt D.P."/>
            <person name="Olsen S.C."/>
        </authorList>
    </citation>
    <scope>NUCLEOTIDE SEQUENCE [LARGE SCALE GENOMIC DNA]</scope>
    <source>
        <strain>9-941</strain>
    </source>
</reference>
<evidence type="ECO:0000255" key="1">
    <source>
        <dbReference type="HAMAP-Rule" id="MF_01363"/>
    </source>
</evidence>
<evidence type="ECO:0000256" key="2">
    <source>
        <dbReference type="SAM" id="MobiDB-lite"/>
    </source>
</evidence>
<evidence type="ECO:0000305" key="3"/>
<sequence length="142" mass="15067">MFAVIKTGGKQYRVAANDLIKVEKVAGEAGDIVEFAEVLMVGSTIGAPTVAGSLVTAEVVEQGRGRKVIAFKKRRRQNSKRTRGHRQELTTIRISEILTDGAKPSKKAAEKKAPKADAAEGEAAKPKKAAPKKAATKAESAE</sequence>
<feature type="chain" id="PRO_0000269289" description="Large ribosomal subunit protein bL21">
    <location>
        <begin position="1"/>
        <end position="142"/>
    </location>
</feature>
<feature type="region of interest" description="Disordered" evidence="2">
    <location>
        <begin position="74"/>
        <end position="142"/>
    </location>
</feature>
<feature type="compositionally biased region" description="Basic residues" evidence="2">
    <location>
        <begin position="74"/>
        <end position="84"/>
    </location>
</feature>
<feature type="compositionally biased region" description="Basic and acidic residues" evidence="2">
    <location>
        <begin position="107"/>
        <end position="125"/>
    </location>
</feature>
<feature type="compositionally biased region" description="Basic residues" evidence="2">
    <location>
        <begin position="126"/>
        <end position="135"/>
    </location>
</feature>
<dbReference type="EMBL" id="AF119331">
    <property type="protein sequence ID" value="AAL32285.1"/>
    <property type="molecule type" value="Genomic_DNA"/>
</dbReference>
<dbReference type="EMBL" id="AE017223">
    <property type="protein sequence ID" value="AAX75144.1"/>
    <property type="molecule type" value="Genomic_DNA"/>
</dbReference>
<dbReference type="RefSeq" id="WP_002966978.1">
    <property type="nucleotide sequence ID" value="NC_006932.1"/>
</dbReference>
<dbReference type="SMR" id="Q8VW57"/>
<dbReference type="EnsemblBacteria" id="AAX75144">
    <property type="protein sequence ID" value="AAX75144"/>
    <property type="gene ID" value="BruAb1_1829"/>
</dbReference>
<dbReference type="GeneID" id="93017813"/>
<dbReference type="KEGG" id="bmb:BruAb1_1829"/>
<dbReference type="HOGENOM" id="CLU_061463_1_1_5"/>
<dbReference type="Proteomes" id="UP000000540">
    <property type="component" value="Chromosome I"/>
</dbReference>
<dbReference type="GO" id="GO:0005737">
    <property type="term" value="C:cytoplasm"/>
    <property type="evidence" value="ECO:0007669"/>
    <property type="project" value="UniProtKB-ARBA"/>
</dbReference>
<dbReference type="GO" id="GO:1990904">
    <property type="term" value="C:ribonucleoprotein complex"/>
    <property type="evidence" value="ECO:0007669"/>
    <property type="project" value="UniProtKB-KW"/>
</dbReference>
<dbReference type="GO" id="GO:0005840">
    <property type="term" value="C:ribosome"/>
    <property type="evidence" value="ECO:0007669"/>
    <property type="project" value="UniProtKB-KW"/>
</dbReference>
<dbReference type="GO" id="GO:0019843">
    <property type="term" value="F:rRNA binding"/>
    <property type="evidence" value="ECO:0007669"/>
    <property type="project" value="UniProtKB-UniRule"/>
</dbReference>
<dbReference type="GO" id="GO:0003735">
    <property type="term" value="F:structural constituent of ribosome"/>
    <property type="evidence" value="ECO:0007669"/>
    <property type="project" value="InterPro"/>
</dbReference>
<dbReference type="GO" id="GO:0006412">
    <property type="term" value="P:translation"/>
    <property type="evidence" value="ECO:0007669"/>
    <property type="project" value="UniProtKB-UniRule"/>
</dbReference>
<dbReference type="HAMAP" id="MF_01363">
    <property type="entry name" value="Ribosomal_bL21"/>
    <property type="match status" value="1"/>
</dbReference>
<dbReference type="InterPro" id="IPR028909">
    <property type="entry name" value="bL21-like"/>
</dbReference>
<dbReference type="InterPro" id="IPR036164">
    <property type="entry name" value="bL21-like_sf"/>
</dbReference>
<dbReference type="InterPro" id="IPR001787">
    <property type="entry name" value="Ribosomal_bL21"/>
</dbReference>
<dbReference type="NCBIfam" id="TIGR00061">
    <property type="entry name" value="L21"/>
    <property type="match status" value="1"/>
</dbReference>
<dbReference type="PANTHER" id="PTHR21349">
    <property type="entry name" value="50S RIBOSOMAL PROTEIN L21"/>
    <property type="match status" value="1"/>
</dbReference>
<dbReference type="PANTHER" id="PTHR21349:SF0">
    <property type="entry name" value="LARGE RIBOSOMAL SUBUNIT PROTEIN BL21M"/>
    <property type="match status" value="1"/>
</dbReference>
<dbReference type="Pfam" id="PF00829">
    <property type="entry name" value="Ribosomal_L21p"/>
    <property type="match status" value="1"/>
</dbReference>
<dbReference type="SUPFAM" id="SSF141091">
    <property type="entry name" value="L21p-like"/>
    <property type="match status" value="1"/>
</dbReference>
<gene>
    <name evidence="1" type="primary">rplU</name>
    <name type="ordered locus">BruAb1_1829</name>
</gene>
<organism>
    <name type="scientific">Brucella abortus biovar 1 (strain 9-941)</name>
    <dbReference type="NCBI Taxonomy" id="262698"/>
    <lineage>
        <taxon>Bacteria</taxon>
        <taxon>Pseudomonadati</taxon>
        <taxon>Pseudomonadota</taxon>
        <taxon>Alphaproteobacteria</taxon>
        <taxon>Hyphomicrobiales</taxon>
        <taxon>Brucellaceae</taxon>
        <taxon>Brucella/Ochrobactrum group</taxon>
        <taxon>Brucella</taxon>
    </lineage>
</organism>
<name>RL21_BRUAB</name>
<accession>Q8VW57</accession>
<accession>Q57B40</accession>
<comment type="function">
    <text evidence="1">This protein binds to 23S rRNA in the presence of protein L20.</text>
</comment>
<comment type="subunit">
    <text evidence="1">Part of the 50S ribosomal subunit. Contacts protein L20.</text>
</comment>
<comment type="similarity">
    <text evidence="1">Belongs to the bacterial ribosomal protein bL21 family.</text>
</comment>
<protein>
    <recommendedName>
        <fullName evidence="1">Large ribosomal subunit protein bL21</fullName>
    </recommendedName>
    <alternativeName>
        <fullName evidence="3">50S ribosomal protein L21</fullName>
    </alternativeName>
</protein>
<keyword id="KW-0687">Ribonucleoprotein</keyword>
<keyword id="KW-0689">Ribosomal protein</keyword>
<keyword id="KW-0694">RNA-binding</keyword>
<keyword id="KW-0699">rRNA-binding</keyword>